<protein>
    <recommendedName>
        <fullName>Chaperone protein Skp</fullName>
    </recommendedName>
</protein>
<gene>
    <name type="primary">skp</name>
    <name type="synonym">ompH</name>
    <name type="ordered locus">YPO1053</name>
    <name type="ordered locus">y3126</name>
    <name type="ordered locus">YP_2797</name>
</gene>
<name>SKP_YERPE</name>
<organism>
    <name type="scientific">Yersinia pestis</name>
    <dbReference type="NCBI Taxonomy" id="632"/>
    <lineage>
        <taxon>Bacteria</taxon>
        <taxon>Pseudomonadati</taxon>
        <taxon>Pseudomonadota</taxon>
        <taxon>Gammaproteobacteria</taxon>
        <taxon>Enterobacterales</taxon>
        <taxon>Yersiniaceae</taxon>
        <taxon>Yersinia</taxon>
    </lineage>
</organism>
<evidence type="ECO:0000250" key="1"/>
<evidence type="ECO:0000255" key="2"/>
<evidence type="ECO:0000305" key="3"/>
<proteinExistence type="inferred from homology"/>
<keyword id="KW-0143">Chaperone</keyword>
<keyword id="KW-0574">Periplasm</keyword>
<keyword id="KW-1185">Reference proteome</keyword>
<keyword id="KW-0732">Signal</keyword>
<sequence length="165" mass="18279">MKKWLCAASLGLALAASASVQAADKIAIVNVSSIFQQLPAREAVAKQLENEFKGRATELQGMERDLQTKMQKLQRDGSTMKASDRTKLENEVMKQRETFSTKAQAFEQDNRRRQAEERNKILSRIQDAVKSVATKGGYDVVIDANAVAYADSSKDITADVLKQVK</sequence>
<feature type="signal peptide" evidence="2">
    <location>
        <begin position="1"/>
        <end position="22"/>
    </location>
</feature>
<feature type="chain" id="PRO_0000020181" description="Chaperone protein Skp">
    <location>
        <begin position="23"/>
        <end position="165"/>
    </location>
</feature>
<feature type="region of interest" description="Lipopolysaccharide binding" evidence="2">
    <location>
        <begin position="102"/>
        <end position="113"/>
    </location>
</feature>
<accession>P58607</accession>
<accession>Q0WHZ2</accession>
<dbReference type="EMBL" id="AL590842">
    <property type="protein sequence ID" value="CAL19718.1"/>
    <property type="molecule type" value="Genomic_DNA"/>
</dbReference>
<dbReference type="EMBL" id="AE009952">
    <property type="protein sequence ID" value="AAM86676.1"/>
    <property type="status" value="ALT_INIT"/>
    <property type="molecule type" value="Genomic_DNA"/>
</dbReference>
<dbReference type="EMBL" id="AE017042">
    <property type="protein sequence ID" value="AAS62981.1"/>
    <property type="status" value="ALT_INIT"/>
    <property type="molecule type" value="Genomic_DNA"/>
</dbReference>
<dbReference type="PIR" id="AD0129">
    <property type="entry name" value="AD0129"/>
</dbReference>
<dbReference type="RefSeq" id="WP_002212140.1">
    <property type="nucleotide sequence ID" value="NZ_WUCM01000044.1"/>
</dbReference>
<dbReference type="RefSeq" id="YP_002346096.1">
    <property type="nucleotide sequence ID" value="NC_003143.1"/>
</dbReference>
<dbReference type="SMR" id="P58607"/>
<dbReference type="STRING" id="214092.YPO1053"/>
<dbReference type="PaxDb" id="214092-YPO1053"/>
<dbReference type="DNASU" id="1148073"/>
<dbReference type="EnsemblBacteria" id="AAS62981">
    <property type="protein sequence ID" value="AAS62981"/>
    <property type="gene ID" value="YP_2797"/>
</dbReference>
<dbReference type="GeneID" id="96662361"/>
<dbReference type="KEGG" id="ype:YPO1053"/>
<dbReference type="KEGG" id="ypk:y3126"/>
<dbReference type="KEGG" id="ypm:YP_2797"/>
<dbReference type="PATRIC" id="fig|214092.21.peg.1341"/>
<dbReference type="eggNOG" id="COG2825">
    <property type="taxonomic scope" value="Bacteria"/>
</dbReference>
<dbReference type="HOGENOM" id="CLU_101388_2_0_6"/>
<dbReference type="OMA" id="MENDLQS"/>
<dbReference type="OrthoDB" id="7061584at2"/>
<dbReference type="Proteomes" id="UP000000815">
    <property type="component" value="Chromosome"/>
</dbReference>
<dbReference type="Proteomes" id="UP000001019">
    <property type="component" value="Chromosome"/>
</dbReference>
<dbReference type="Proteomes" id="UP000002490">
    <property type="component" value="Chromosome"/>
</dbReference>
<dbReference type="GO" id="GO:0042597">
    <property type="term" value="C:periplasmic space"/>
    <property type="evidence" value="ECO:0007669"/>
    <property type="project" value="UniProtKB-SubCell"/>
</dbReference>
<dbReference type="GO" id="GO:0051082">
    <property type="term" value="F:unfolded protein binding"/>
    <property type="evidence" value="ECO:0007669"/>
    <property type="project" value="InterPro"/>
</dbReference>
<dbReference type="GO" id="GO:0061077">
    <property type="term" value="P:chaperone-mediated protein folding"/>
    <property type="evidence" value="ECO:0000318"/>
    <property type="project" value="GO_Central"/>
</dbReference>
<dbReference type="GO" id="GO:0050821">
    <property type="term" value="P:protein stabilization"/>
    <property type="evidence" value="ECO:0000318"/>
    <property type="project" value="GO_Central"/>
</dbReference>
<dbReference type="FunFam" id="3.30.910.20:FF:000001">
    <property type="entry name" value="Molecular chaperone Skp"/>
    <property type="match status" value="1"/>
</dbReference>
<dbReference type="Gene3D" id="3.30.910.20">
    <property type="entry name" value="Skp domain"/>
    <property type="match status" value="1"/>
</dbReference>
<dbReference type="InterPro" id="IPR005632">
    <property type="entry name" value="Chaperone_Skp"/>
</dbReference>
<dbReference type="InterPro" id="IPR024930">
    <property type="entry name" value="Skp_dom_sf"/>
</dbReference>
<dbReference type="NCBIfam" id="NF008047">
    <property type="entry name" value="PRK10780.1"/>
    <property type="match status" value="1"/>
</dbReference>
<dbReference type="PANTHER" id="PTHR35089">
    <property type="entry name" value="CHAPERONE PROTEIN SKP"/>
    <property type="match status" value="1"/>
</dbReference>
<dbReference type="PANTHER" id="PTHR35089:SF1">
    <property type="entry name" value="CHAPERONE PROTEIN SKP"/>
    <property type="match status" value="1"/>
</dbReference>
<dbReference type="Pfam" id="PF03938">
    <property type="entry name" value="OmpH"/>
    <property type="match status" value="1"/>
</dbReference>
<dbReference type="PIRSF" id="PIRSF002094">
    <property type="entry name" value="OMP26_Skp"/>
    <property type="match status" value="1"/>
</dbReference>
<dbReference type="SMART" id="SM00935">
    <property type="entry name" value="OmpH"/>
    <property type="match status" value="1"/>
</dbReference>
<dbReference type="SUPFAM" id="SSF111384">
    <property type="entry name" value="OmpH-like"/>
    <property type="match status" value="1"/>
</dbReference>
<reference key="1">
    <citation type="journal article" date="2001" name="Nature">
        <title>Genome sequence of Yersinia pestis, the causative agent of plague.</title>
        <authorList>
            <person name="Parkhill J."/>
            <person name="Wren B.W."/>
            <person name="Thomson N.R."/>
            <person name="Titball R.W."/>
            <person name="Holden M.T.G."/>
            <person name="Prentice M.B."/>
            <person name="Sebaihia M."/>
            <person name="James K.D."/>
            <person name="Churcher C.M."/>
            <person name="Mungall K.L."/>
            <person name="Baker S."/>
            <person name="Basham D."/>
            <person name="Bentley S.D."/>
            <person name="Brooks K."/>
            <person name="Cerdeno-Tarraga A.-M."/>
            <person name="Chillingworth T."/>
            <person name="Cronin A."/>
            <person name="Davies R.M."/>
            <person name="Davis P."/>
            <person name="Dougan G."/>
            <person name="Feltwell T."/>
            <person name="Hamlin N."/>
            <person name="Holroyd S."/>
            <person name="Jagels K."/>
            <person name="Karlyshev A.V."/>
            <person name="Leather S."/>
            <person name="Moule S."/>
            <person name="Oyston P.C.F."/>
            <person name="Quail M.A."/>
            <person name="Rutherford K.M."/>
            <person name="Simmonds M."/>
            <person name="Skelton J."/>
            <person name="Stevens K."/>
            <person name="Whitehead S."/>
            <person name="Barrell B.G."/>
        </authorList>
    </citation>
    <scope>NUCLEOTIDE SEQUENCE [LARGE SCALE GENOMIC DNA]</scope>
    <source>
        <strain>CO-92 / Biovar Orientalis</strain>
    </source>
</reference>
<reference key="2">
    <citation type="journal article" date="2002" name="J. Bacteriol.">
        <title>Genome sequence of Yersinia pestis KIM.</title>
        <authorList>
            <person name="Deng W."/>
            <person name="Burland V."/>
            <person name="Plunkett G. III"/>
            <person name="Boutin A."/>
            <person name="Mayhew G.F."/>
            <person name="Liss P."/>
            <person name="Perna N.T."/>
            <person name="Rose D.J."/>
            <person name="Mau B."/>
            <person name="Zhou S."/>
            <person name="Schwartz D.C."/>
            <person name="Fetherston J.D."/>
            <person name="Lindler L.E."/>
            <person name="Brubaker R.R."/>
            <person name="Plano G.V."/>
            <person name="Straley S.C."/>
            <person name="McDonough K.A."/>
            <person name="Nilles M.L."/>
            <person name="Matson J.S."/>
            <person name="Blattner F.R."/>
            <person name="Perry R.D."/>
        </authorList>
    </citation>
    <scope>NUCLEOTIDE SEQUENCE [LARGE SCALE GENOMIC DNA]</scope>
    <source>
        <strain>KIM10+ / Biovar Mediaevalis</strain>
    </source>
</reference>
<reference key="3">
    <citation type="journal article" date="2004" name="DNA Res.">
        <title>Complete genome sequence of Yersinia pestis strain 91001, an isolate avirulent to humans.</title>
        <authorList>
            <person name="Song Y."/>
            <person name="Tong Z."/>
            <person name="Wang J."/>
            <person name="Wang L."/>
            <person name="Guo Z."/>
            <person name="Han Y."/>
            <person name="Zhang J."/>
            <person name="Pei D."/>
            <person name="Zhou D."/>
            <person name="Qin H."/>
            <person name="Pang X."/>
            <person name="Han Y."/>
            <person name="Zhai J."/>
            <person name="Li M."/>
            <person name="Cui B."/>
            <person name="Qi Z."/>
            <person name="Jin L."/>
            <person name="Dai R."/>
            <person name="Chen F."/>
            <person name="Li S."/>
            <person name="Ye C."/>
            <person name="Du Z."/>
            <person name="Lin W."/>
            <person name="Wang J."/>
            <person name="Yu J."/>
            <person name="Yang H."/>
            <person name="Wang J."/>
            <person name="Huang P."/>
            <person name="Yang R."/>
        </authorList>
    </citation>
    <scope>NUCLEOTIDE SEQUENCE [LARGE SCALE GENOMIC DNA]</scope>
    <source>
        <strain>91001 / Biovar Mediaevalis</strain>
    </source>
</reference>
<comment type="function">
    <text evidence="1">Molecular chaperone that interacts specifically with outer membrane proteins, thus maintaining the solubility of early folding intermediates during passage through the periplasm.</text>
</comment>
<comment type="subunit">
    <text evidence="1">Homotrimer.</text>
</comment>
<comment type="subcellular location">
    <subcellularLocation>
        <location evidence="1">Periplasm</location>
    </subcellularLocation>
</comment>
<comment type="similarity">
    <text evidence="3">Belongs to the Skp family.</text>
</comment>
<comment type="sequence caution" evidence="3">
    <conflict type="erroneous initiation">
        <sequence resource="EMBL-CDS" id="AAM86676"/>
    </conflict>
</comment>
<comment type="sequence caution" evidence="3">
    <conflict type="erroneous initiation">
        <sequence resource="EMBL-CDS" id="AAS62981"/>
    </conflict>
</comment>